<name>IMPB_SALTM</name>
<proteinExistence type="inferred from homology"/>
<reference key="1">
    <citation type="journal article" date="1990" name="Nucleic Acids Res.">
        <title>DNA sequence analysis of the imp UV protection and mutation operon of the plasmid TP110: identification of a third gene.</title>
        <authorList>
            <person name="Lodwick D."/>
            <person name="Owen D."/>
            <person name="Strike P."/>
        </authorList>
    </citation>
    <scope>NUCLEOTIDE SEQUENCE [GENOMIC DNA]</scope>
</reference>
<gene>
    <name type="primary">impB</name>
</gene>
<organism>
    <name type="scientific">Salmonella typhimurium</name>
    <dbReference type="NCBI Taxonomy" id="90371"/>
    <lineage>
        <taxon>Bacteria</taxon>
        <taxon>Pseudomonadati</taxon>
        <taxon>Pseudomonadota</taxon>
        <taxon>Gammaproteobacteria</taxon>
        <taxon>Enterobacterales</taxon>
        <taxon>Enterobacteriaceae</taxon>
        <taxon>Salmonella</taxon>
    </lineage>
</organism>
<protein>
    <recommendedName>
        <fullName>Protein ImpB</fullName>
    </recommendedName>
</protein>
<dbReference type="EMBL" id="X53528">
    <property type="protein sequence ID" value="CAA37608.1"/>
    <property type="molecule type" value="Genomic_DNA"/>
</dbReference>
<dbReference type="PIR" id="JQ0661">
    <property type="entry name" value="JQ0661"/>
</dbReference>
<dbReference type="RefSeq" id="NP_863406.1">
    <property type="nucleotide sequence ID" value="NC_005014.1"/>
</dbReference>
<dbReference type="RefSeq" id="WP_000457492.1">
    <property type="nucleotide sequence ID" value="NZ_WSAH01000028.1"/>
</dbReference>
<dbReference type="RefSeq" id="YP_008994914.1">
    <property type="nucleotide sequence ID" value="NC_023275.1"/>
</dbReference>
<dbReference type="RefSeq" id="YP_008995021.1">
    <property type="nucleotide sequence ID" value="NC_023276.1"/>
</dbReference>
<dbReference type="RefSeq" id="YP_008997550.1">
    <property type="nucleotide sequence ID" value="NC_023290.1"/>
</dbReference>
<dbReference type="RefSeq" id="YP_009022404.1">
    <property type="nucleotide sequence ID" value="NC_023900.1"/>
</dbReference>
<dbReference type="SMR" id="P18642"/>
<dbReference type="GO" id="GO:0005829">
    <property type="term" value="C:cytosol"/>
    <property type="evidence" value="ECO:0007669"/>
    <property type="project" value="TreeGrafter"/>
</dbReference>
<dbReference type="GO" id="GO:0003684">
    <property type="term" value="F:damaged DNA binding"/>
    <property type="evidence" value="ECO:0007669"/>
    <property type="project" value="InterPro"/>
</dbReference>
<dbReference type="GO" id="GO:0003887">
    <property type="term" value="F:DNA-directed DNA polymerase activity"/>
    <property type="evidence" value="ECO:0007669"/>
    <property type="project" value="TreeGrafter"/>
</dbReference>
<dbReference type="GO" id="GO:0042276">
    <property type="term" value="P:error-prone translesion synthesis"/>
    <property type="evidence" value="ECO:0007669"/>
    <property type="project" value="TreeGrafter"/>
</dbReference>
<dbReference type="GO" id="GO:0009432">
    <property type="term" value="P:SOS response"/>
    <property type="evidence" value="ECO:0007669"/>
    <property type="project" value="UniProtKB-KW"/>
</dbReference>
<dbReference type="CDD" id="cd01700">
    <property type="entry name" value="PolY_Pol_V_umuC"/>
    <property type="match status" value="1"/>
</dbReference>
<dbReference type="Gene3D" id="3.30.70.270">
    <property type="match status" value="1"/>
</dbReference>
<dbReference type="Gene3D" id="3.40.1170.60">
    <property type="match status" value="1"/>
</dbReference>
<dbReference type="Gene3D" id="1.10.150.20">
    <property type="entry name" value="5' to 3' exonuclease, C-terminal subdomain"/>
    <property type="match status" value="1"/>
</dbReference>
<dbReference type="Gene3D" id="3.30.1490.100">
    <property type="entry name" value="DNA polymerase, Y-family, little finger domain"/>
    <property type="match status" value="1"/>
</dbReference>
<dbReference type="InterPro" id="IPR043502">
    <property type="entry name" value="DNA/RNA_pol_sf"/>
</dbReference>
<dbReference type="InterPro" id="IPR036775">
    <property type="entry name" value="DNA_pol_Y-fam_lit_finger_sf"/>
</dbReference>
<dbReference type="InterPro" id="IPR017961">
    <property type="entry name" value="DNA_pol_Y-fam_little_finger"/>
</dbReference>
<dbReference type="InterPro" id="IPR050116">
    <property type="entry name" value="DNA_polymerase-Y"/>
</dbReference>
<dbReference type="InterPro" id="IPR025188">
    <property type="entry name" value="DUF4113"/>
</dbReference>
<dbReference type="InterPro" id="IPR043128">
    <property type="entry name" value="Rev_trsase/Diguanyl_cyclase"/>
</dbReference>
<dbReference type="InterPro" id="IPR001126">
    <property type="entry name" value="UmuC"/>
</dbReference>
<dbReference type="NCBIfam" id="NF002955">
    <property type="entry name" value="PRK03609.1"/>
    <property type="match status" value="1"/>
</dbReference>
<dbReference type="PANTHER" id="PTHR11076">
    <property type="entry name" value="DNA REPAIR POLYMERASE UMUC / TRANSFERASE FAMILY MEMBER"/>
    <property type="match status" value="1"/>
</dbReference>
<dbReference type="PANTHER" id="PTHR11076:SF34">
    <property type="entry name" value="PROTEIN UMUC"/>
    <property type="match status" value="1"/>
</dbReference>
<dbReference type="Pfam" id="PF13438">
    <property type="entry name" value="DUF4113"/>
    <property type="match status" value="1"/>
</dbReference>
<dbReference type="Pfam" id="PF00817">
    <property type="entry name" value="IMS"/>
    <property type="match status" value="1"/>
</dbReference>
<dbReference type="Pfam" id="PF11799">
    <property type="entry name" value="IMS_C"/>
    <property type="match status" value="1"/>
</dbReference>
<dbReference type="SUPFAM" id="SSF56672">
    <property type="entry name" value="DNA/RNA polymerases"/>
    <property type="match status" value="1"/>
</dbReference>
<dbReference type="SUPFAM" id="SSF100879">
    <property type="entry name" value="Lesion bypass DNA polymerase (Y-family), little finger domain"/>
    <property type="match status" value="1"/>
</dbReference>
<dbReference type="PROSITE" id="PS50173">
    <property type="entry name" value="UMUC"/>
    <property type="match status" value="1"/>
</dbReference>
<evidence type="ECO:0000255" key="1">
    <source>
        <dbReference type="PROSITE-ProRule" id="PRU00216"/>
    </source>
</evidence>
<evidence type="ECO:0000305" key="2"/>
<geneLocation type="plasmid">
    <name>IncI1 TP110</name>
</geneLocation>
<sequence length="424" mass="47786">MFALADINSFYASCEKVFRPDLRNEPVIVLSNNDGCVIARSPEAKALGIRMGQPWFQVRQMRLEKKIHVFSSNYALYHSMSQRVMAVLESLSPAVEPYSIDEMFIDLRGINHCISPEFFGHQLREQVKSWTGLTMGVGIAPTKTLAKSAQWATKQWPQFSGVVALTAENRNRILKLLGLQPVGEVWGVGHRLTEKLNALGINTALQLAQANTAFIRKNFSVILERTVRELNGESCISLEEAPPAKQQIVCSRSFGERITDKDAMHQAVVQYAERAAEKLRGERQYCRQVTTFVRTSPFAVKEPCYSNAAVEKLPLPTQDSRDIIAAACRALNHVWREGYRYMKAGVMLADFTPSGIAQPGLFDEIQPRKNSEKLMKTLDELNQSGKGKVWFAGRGTAPEWQMKREMLSQCYTTKWRDIPLARLG</sequence>
<feature type="chain" id="PRO_0000173978" description="Protein ImpB">
    <location>
        <begin position="1"/>
        <end position="424"/>
    </location>
</feature>
<feature type="domain" description="UmuC" evidence="1">
    <location>
        <begin position="2"/>
        <end position="189"/>
    </location>
</feature>
<comment type="function">
    <text>Involved in UV protection and mutation.</text>
</comment>
<comment type="similarity">
    <text evidence="2">Belongs to the DNA polymerase type-Y family.</text>
</comment>
<keyword id="KW-0227">DNA damage</keyword>
<keyword id="KW-0234">DNA repair</keyword>
<keyword id="KW-0614">Plasmid</keyword>
<keyword id="KW-0741">SOS mutagenesis</keyword>
<keyword id="KW-0742">SOS response</keyword>
<accession>P18642</accession>